<dbReference type="EMBL" id="AL391737">
    <property type="protein sequence ID" value="CAD24913.1"/>
    <property type="molecule type" value="Genomic_DNA"/>
</dbReference>
<dbReference type="RefSeq" id="NP_001402128.1">
    <property type="nucleotide sequence ID" value="NM_001415558.1"/>
</dbReference>
<dbReference type="RefSeq" id="XP_965878.1">
    <property type="nucleotide sequence ID" value="XM_960785.1"/>
</dbReference>
<dbReference type="GeneID" id="860218"/>
<dbReference type="VEuPathDB" id="MicrosporidiaDB:ECU01_0440"/>
<dbReference type="HOGENOM" id="CLU_1896188_0_0_1"/>
<dbReference type="InParanoid" id="Q8SWP0"/>
<dbReference type="OrthoDB" id="2194316at2759"/>
<dbReference type="Proteomes" id="UP000000819">
    <property type="component" value="Chromosome I"/>
</dbReference>
<evidence type="ECO:0000255" key="1"/>
<evidence type="ECO:0000256" key="2">
    <source>
        <dbReference type="SAM" id="MobiDB-lite"/>
    </source>
</evidence>
<evidence type="ECO:0000269" key="3">
    <source>
    </source>
</evidence>
<proteinExistence type="evidence at protein level"/>
<organism>
    <name type="scientific">Encephalitozoon cuniculi (strain GB-M1)</name>
    <name type="common">Microsporidian parasite</name>
    <dbReference type="NCBI Taxonomy" id="284813"/>
    <lineage>
        <taxon>Eukaryota</taxon>
        <taxon>Fungi</taxon>
        <taxon>Fungi incertae sedis</taxon>
        <taxon>Microsporidia</taxon>
        <taxon>Unikaryonidae</taxon>
        <taxon>Encephalitozoon</taxon>
    </lineage>
</organism>
<comment type="developmental stage">
    <text evidence="3">Expressed in late sporogonial stages.</text>
</comment>
<sequence>MRLYKAMALCLPLVVICTSEVSQSTAETMKSKAQDSYKRVVEHGKTCLERMCGLLSRGKGMLYTRVKNIVSSIRRGGEKNEEVAGPVDGEGSEEEAFDLSPEDIEKLIEEIKKKLAGYMDVTGEQNEEEEKKEL</sequence>
<name>Y144_ENCCU</name>
<reference key="1">
    <citation type="journal article" date="2001" name="Genome Res.">
        <title>Sequence and analysis of chromosome I of the amitochondriate intracellular parasite Encephalitozoon cuniculi (Microspora).</title>
        <authorList>
            <person name="Peyret P."/>
            <person name="Katinka M.D."/>
            <person name="Duprat S."/>
            <person name="Duffieux F."/>
            <person name="Barbe V."/>
            <person name="Barbazanges M."/>
            <person name="Weissenbach J."/>
            <person name="Saurin W."/>
            <person name="Vivares C.P."/>
        </authorList>
    </citation>
    <scope>NUCLEOTIDE SEQUENCE [LARGE SCALE GENOMIC DNA]</scope>
    <source>
        <strain>GB-M1</strain>
    </source>
</reference>
<reference key="2">
    <citation type="journal article" date="2001" name="Nature">
        <title>Genome sequence and gene compaction of the eukaryote parasite Encephalitozoon cuniculi.</title>
        <authorList>
            <person name="Katinka M.D."/>
            <person name="Duprat S."/>
            <person name="Cornillot E."/>
            <person name="Metenier G."/>
            <person name="Thomarat F."/>
            <person name="Prensier G."/>
            <person name="Barbe V."/>
            <person name="Peyretaillade E."/>
            <person name="Brottier P."/>
            <person name="Wincker P."/>
            <person name="Delbac F."/>
            <person name="El Alaoui H."/>
            <person name="Peyret P."/>
            <person name="Saurin W."/>
            <person name="Gouy M."/>
            <person name="Weissenbach J."/>
            <person name="Vivares C.P."/>
        </authorList>
    </citation>
    <scope>NUCLEOTIDE SEQUENCE [LARGE SCALE GENOMIC DNA]</scope>
    <source>
        <strain>GB-M1</strain>
    </source>
</reference>
<reference key="3">
    <citation type="journal article" date="2006" name="Proteomics">
        <title>Proteomic analysis of the eukaryotic parasite Encephalitozoon cuniculi (microsporidia): a reference map for proteins expressed in late sporogonial stages.</title>
        <authorList>
            <person name="Brosson D."/>
            <person name="Kuhn L."/>
            <person name="Delbac F."/>
            <person name="Garin J."/>
            <person name="Vivares C.P."/>
            <person name="Texier C."/>
        </authorList>
    </citation>
    <scope>IDENTIFICATION BY MASS SPECTROMETRY [LARGE SCALE ANALYSIS]</scope>
    <scope>DEVELOPMENTAL STAGE</scope>
    <scope>SUBCELLULAR LOCATION</scope>
</reference>
<accession>Q8SWP0</accession>
<gene>
    <name type="ordered locus">ECU01_0440</name>
</gene>
<keyword id="KW-1185">Reference proteome</keyword>
<keyword id="KW-0732">Signal</keyword>
<feature type="signal peptide" evidence="1">
    <location>
        <begin position="1"/>
        <end position="26"/>
    </location>
</feature>
<feature type="chain" id="PRO_0000382765" description="Uncharacterized protein ECU01_0440">
    <location>
        <begin position="27"/>
        <end position="134"/>
    </location>
</feature>
<feature type="region of interest" description="Disordered" evidence="2">
    <location>
        <begin position="77"/>
        <end position="98"/>
    </location>
</feature>
<protein>
    <recommendedName>
        <fullName>Uncharacterized protein ECU01_0440</fullName>
    </recommendedName>
</protein>